<sequence>MSYCKIEAPYPEAEAGEKRIIFALDPKGDEVEQEQCMLQLIPGRVLEMSRNDAANHQTLGGSIEQHTVEGFGAKFFHVKLAKQAVSTLMYVHAEDHGEKVRKFVAMSNAPMFPYRSRYPVVVYLPKDAELRYGIWCGGQQMQAATE</sequence>
<name>ECOT1_LEIMA</name>
<keyword id="KW-1185">Reference proteome</keyword>
<evidence type="ECO:0000305" key="1"/>
<protein>
    <recommendedName>
        <fullName>Ecotin-like protein 1</fullName>
    </recommendedName>
    <alternativeName>
        <fullName>Inhibitor of serine peptidase 1</fullName>
        <shortName>LmISP1</shortName>
    </alternativeName>
</protein>
<gene>
    <name type="primary">ISP1</name>
    <name type="ORF">LmjF15.0300</name>
    <name type="ORF">LmjF_15_0300</name>
</gene>
<proteinExistence type="inferred from homology"/>
<accession>Q4QFF0</accession>
<feature type="chain" id="PRO_0000291592" description="Ecotin-like protein 1">
    <location>
        <begin position="1"/>
        <end position="146"/>
    </location>
</feature>
<organism>
    <name type="scientific">Leishmania major</name>
    <dbReference type="NCBI Taxonomy" id="5664"/>
    <lineage>
        <taxon>Eukaryota</taxon>
        <taxon>Discoba</taxon>
        <taxon>Euglenozoa</taxon>
        <taxon>Kinetoplastea</taxon>
        <taxon>Metakinetoplastina</taxon>
        <taxon>Trypanosomatida</taxon>
        <taxon>Trypanosomatidae</taxon>
        <taxon>Leishmaniinae</taxon>
        <taxon>Leishmania</taxon>
    </lineage>
</organism>
<dbReference type="EMBL" id="FR796411">
    <property type="protein sequence ID" value="CAJ03258.1"/>
    <property type="molecule type" value="Genomic_DNA"/>
</dbReference>
<dbReference type="SMR" id="Q4QFF0"/>
<dbReference type="MEROPS" id="I11.002"/>
<dbReference type="EnsemblProtists" id="CAJ03258">
    <property type="protein sequence ID" value="CAJ03258"/>
    <property type="gene ID" value="LMJF_15_0300"/>
</dbReference>
<dbReference type="KEGG" id="lma:LMJF_15_0300"/>
<dbReference type="VEuPathDB" id="TriTrypDB:LmjF.15.0300"/>
<dbReference type="VEuPathDB" id="TriTrypDB:LMJFC_150009200"/>
<dbReference type="VEuPathDB" id="TriTrypDB:LMJLV39_150008900"/>
<dbReference type="VEuPathDB" id="TriTrypDB:LMJSD75_150008800"/>
<dbReference type="eggNOG" id="ENOG502SNN7">
    <property type="taxonomic scope" value="Eukaryota"/>
</dbReference>
<dbReference type="InParanoid" id="Q4QFF0"/>
<dbReference type="OMA" id="NDAANHQ"/>
<dbReference type="Proteomes" id="UP000000542">
    <property type="component" value="Chromosome 15"/>
</dbReference>
<dbReference type="GO" id="GO:0004867">
    <property type="term" value="F:serine-type endopeptidase inhibitor activity"/>
    <property type="evidence" value="ECO:0007669"/>
    <property type="project" value="InterPro"/>
</dbReference>
<dbReference type="Gene3D" id="2.60.40.550">
    <property type="entry name" value="Ecotin"/>
    <property type="match status" value="1"/>
</dbReference>
<dbReference type="InterPro" id="IPR036198">
    <property type="entry name" value="Ecotin_sf"/>
</dbReference>
<dbReference type="InterPro" id="IPR005658">
    <property type="entry name" value="Prot_inh_ecotin"/>
</dbReference>
<dbReference type="PANTHER" id="PTHR35890">
    <property type="match status" value="1"/>
</dbReference>
<dbReference type="PANTHER" id="PTHR35890:SF3">
    <property type="entry name" value="ECOTIN"/>
    <property type="match status" value="1"/>
</dbReference>
<dbReference type="Pfam" id="PF03974">
    <property type="entry name" value="Ecotin"/>
    <property type="match status" value="1"/>
</dbReference>
<dbReference type="SUPFAM" id="SSF49772">
    <property type="entry name" value="Ecotin, trypsin inhibitor"/>
    <property type="match status" value="1"/>
</dbReference>
<comment type="similarity">
    <text evidence="1">Belongs to the protease inhibitor I11 (ecotin) family.</text>
</comment>
<reference key="1">
    <citation type="journal article" date="2005" name="Science">
        <title>The genome of the kinetoplastid parasite, Leishmania major.</title>
        <authorList>
            <person name="Ivens A.C."/>
            <person name="Peacock C.S."/>
            <person name="Worthey E.A."/>
            <person name="Murphy L."/>
            <person name="Aggarwal G."/>
            <person name="Berriman M."/>
            <person name="Sisk E."/>
            <person name="Rajandream M.A."/>
            <person name="Adlem E."/>
            <person name="Aert R."/>
            <person name="Anupama A."/>
            <person name="Apostolou Z."/>
            <person name="Attipoe P."/>
            <person name="Bason N."/>
            <person name="Bauser C."/>
            <person name="Beck A."/>
            <person name="Beverley S.M."/>
            <person name="Bianchettin G."/>
            <person name="Borzym K."/>
            <person name="Bothe G."/>
            <person name="Bruschi C.V."/>
            <person name="Collins M."/>
            <person name="Cadag E."/>
            <person name="Ciarloni L."/>
            <person name="Clayton C."/>
            <person name="Coulson R.M.R."/>
            <person name="Cronin A."/>
            <person name="Cruz A.K."/>
            <person name="Davies R.M."/>
            <person name="De Gaudenzi J."/>
            <person name="Dobson D.E."/>
            <person name="Duesterhoeft A."/>
            <person name="Fazelina G."/>
            <person name="Fosker N."/>
            <person name="Frasch A.C."/>
            <person name="Fraser A."/>
            <person name="Fuchs M."/>
            <person name="Gabel C."/>
            <person name="Goble A."/>
            <person name="Goffeau A."/>
            <person name="Harris D."/>
            <person name="Hertz-Fowler C."/>
            <person name="Hilbert H."/>
            <person name="Horn D."/>
            <person name="Huang Y."/>
            <person name="Klages S."/>
            <person name="Knights A."/>
            <person name="Kube M."/>
            <person name="Larke N."/>
            <person name="Litvin L."/>
            <person name="Lord A."/>
            <person name="Louie T."/>
            <person name="Marra M."/>
            <person name="Masuy D."/>
            <person name="Matthews K."/>
            <person name="Michaeli S."/>
            <person name="Mottram J.C."/>
            <person name="Mueller-Auer S."/>
            <person name="Munden H."/>
            <person name="Nelson S."/>
            <person name="Norbertczak H."/>
            <person name="Oliver K."/>
            <person name="O'neil S."/>
            <person name="Pentony M."/>
            <person name="Pohl T.M."/>
            <person name="Price C."/>
            <person name="Purnelle B."/>
            <person name="Quail M.A."/>
            <person name="Rabbinowitsch E."/>
            <person name="Reinhardt R."/>
            <person name="Rieger M."/>
            <person name="Rinta J."/>
            <person name="Robben J."/>
            <person name="Robertson L."/>
            <person name="Ruiz J.C."/>
            <person name="Rutter S."/>
            <person name="Saunders D."/>
            <person name="Schaefer M."/>
            <person name="Schein J."/>
            <person name="Schwartz D.C."/>
            <person name="Seeger K."/>
            <person name="Seyler A."/>
            <person name="Sharp S."/>
            <person name="Shin H."/>
            <person name="Sivam D."/>
            <person name="Squares R."/>
            <person name="Squares S."/>
            <person name="Tosato V."/>
            <person name="Vogt C."/>
            <person name="Volckaert G."/>
            <person name="Wambutt R."/>
            <person name="Warren T."/>
            <person name="Wedler H."/>
            <person name="Woodward J."/>
            <person name="Zhou S."/>
            <person name="Zimmermann W."/>
            <person name="Smith D.F."/>
            <person name="Blackwell J.M."/>
            <person name="Stuart K.D."/>
            <person name="Barrell B.G."/>
            <person name="Myler P.J."/>
        </authorList>
    </citation>
    <scope>NUCLEOTIDE SEQUENCE [LARGE SCALE GENOMIC DNA]</scope>
    <source>
        <strain>MHOM/IL/81/Friedlin</strain>
    </source>
</reference>